<gene>
    <name evidence="1" type="primary">miaA</name>
    <name type="ordered locus">CPE1157</name>
</gene>
<protein>
    <recommendedName>
        <fullName evidence="1">tRNA dimethylallyltransferase</fullName>
        <ecNumber evidence="1">2.5.1.75</ecNumber>
    </recommendedName>
    <alternativeName>
        <fullName evidence="1">Dimethylallyl diphosphate:tRNA dimethylallyltransferase</fullName>
        <shortName evidence="1">DMAPP:tRNA dimethylallyltransferase</shortName>
        <shortName evidence="1">DMATase</shortName>
    </alternativeName>
    <alternativeName>
        <fullName evidence="1">Isopentenyl-diphosphate:tRNA isopentenyltransferase</fullName>
        <shortName evidence="1">IPP transferase</shortName>
        <shortName evidence="1">IPPT</shortName>
        <shortName evidence="1">IPTase</shortName>
    </alternativeName>
</protein>
<name>MIAA_CLOPE</name>
<dbReference type="EC" id="2.5.1.75" evidence="1"/>
<dbReference type="EMBL" id="BA000016">
    <property type="protein sequence ID" value="BAB80863.1"/>
    <property type="molecule type" value="Genomic_DNA"/>
</dbReference>
<dbReference type="RefSeq" id="WP_011010291.1">
    <property type="nucleotide sequence ID" value="NC_003366.1"/>
</dbReference>
<dbReference type="SMR" id="Q8XL85"/>
<dbReference type="STRING" id="195102.gene:10490420"/>
<dbReference type="KEGG" id="cpe:CPE1157"/>
<dbReference type="HOGENOM" id="CLU_032616_0_1_9"/>
<dbReference type="Proteomes" id="UP000000818">
    <property type="component" value="Chromosome"/>
</dbReference>
<dbReference type="GO" id="GO:0005524">
    <property type="term" value="F:ATP binding"/>
    <property type="evidence" value="ECO:0007669"/>
    <property type="project" value="UniProtKB-UniRule"/>
</dbReference>
<dbReference type="GO" id="GO:0052381">
    <property type="term" value="F:tRNA dimethylallyltransferase activity"/>
    <property type="evidence" value="ECO:0007669"/>
    <property type="project" value="UniProtKB-UniRule"/>
</dbReference>
<dbReference type="GO" id="GO:0006400">
    <property type="term" value="P:tRNA modification"/>
    <property type="evidence" value="ECO:0007669"/>
    <property type="project" value="TreeGrafter"/>
</dbReference>
<dbReference type="FunFam" id="1.10.20.140:FF:000001">
    <property type="entry name" value="tRNA dimethylallyltransferase"/>
    <property type="match status" value="1"/>
</dbReference>
<dbReference type="Gene3D" id="1.10.20.140">
    <property type="match status" value="1"/>
</dbReference>
<dbReference type="Gene3D" id="3.40.50.300">
    <property type="entry name" value="P-loop containing nucleotide triphosphate hydrolases"/>
    <property type="match status" value="1"/>
</dbReference>
<dbReference type="HAMAP" id="MF_00185">
    <property type="entry name" value="IPP_trans"/>
    <property type="match status" value="1"/>
</dbReference>
<dbReference type="InterPro" id="IPR039657">
    <property type="entry name" value="Dimethylallyltransferase"/>
</dbReference>
<dbReference type="InterPro" id="IPR018022">
    <property type="entry name" value="IPT"/>
</dbReference>
<dbReference type="InterPro" id="IPR027417">
    <property type="entry name" value="P-loop_NTPase"/>
</dbReference>
<dbReference type="NCBIfam" id="TIGR00174">
    <property type="entry name" value="miaA"/>
    <property type="match status" value="1"/>
</dbReference>
<dbReference type="PANTHER" id="PTHR11088">
    <property type="entry name" value="TRNA DIMETHYLALLYLTRANSFERASE"/>
    <property type="match status" value="1"/>
</dbReference>
<dbReference type="PANTHER" id="PTHR11088:SF60">
    <property type="entry name" value="TRNA DIMETHYLALLYLTRANSFERASE"/>
    <property type="match status" value="1"/>
</dbReference>
<dbReference type="Pfam" id="PF01715">
    <property type="entry name" value="IPPT"/>
    <property type="match status" value="1"/>
</dbReference>
<dbReference type="SUPFAM" id="SSF52540">
    <property type="entry name" value="P-loop containing nucleoside triphosphate hydrolases"/>
    <property type="match status" value="2"/>
</dbReference>
<comment type="function">
    <text evidence="1">Catalyzes the transfer of a dimethylallyl group onto the adenine at position 37 in tRNAs that read codons beginning with uridine, leading to the formation of N6-(dimethylallyl)adenosine (i(6)A).</text>
</comment>
<comment type="catalytic activity">
    <reaction evidence="1">
        <text>adenosine(37) in tRNA + dimethylallyl diphosphate = N(6)-dimethylallyladenosine(37) in tRNA + diphosphate</text>
        <dbReference type="Rhea" id="RHEA:26482"/>
        <dbReference type="Rhea" id="RHEA-COMP:10162"/>
        <dbReference type="Rhea" id="RHEA-COMP:10375"/>
        <dbReference type="ChEBI" id="CHEBI:33019"/>
        <dbReference type="ChEBI" id="CHEBI:57623"/>
        <dbReference type="ChEBI" id="CHEBI:74411"/>
        <dbReference type="ChEBI" id="CHEBI:74415"/>
        <dbReference type="EC" id="2.5.1.75"/>
    </reaction>
</comment>
<comment type="cofactor">
    <cofactor evidence="1">
        <name>Mg(2+)</name>
        <dbReference type="ChEBI" id="CHEBI:18420"/>
    </cofactor>
</comment>
<comment type="subunit">
    <text evidence="1">Monomer.</text>
</comment>
<comment type="similarity">
    <text evidence="1">Belongs to the IPP transferase family.</text>
</comment>
<proteinExistence type="inferred from homology"/>
<feature type="chain" id="PRO_0000163904" description="tRNA dimethylallyltransferase">
    <location>
        <begin position="1"/>
        <end position="310"/>
    </location>
</feature>
<feature type="region of interest" description="Interaction with substrate tRNA" evidence="1">
    <location>
        <begin position="35"/>
        <end position="38"/>
    </location>
</feature>
<feature type="binding site" evidence="1">
    <location>
        <begin position="10"/>
        <end position="17"/>
    </location>
    <ligand>
        <name>ATP</name>
        <dbReference type="ChEBI" id="CHEBI:30616"/>
    </ligand>
</feature>
<feature type="binding site" evidence="1">
    <location>
        <begin position="12"/>
        <end position="17"/>
    </location>
    <ligand>
        <name>substrate</name>
    </ligand>
</feature>
<feature type="site" description="Interaction with substrate tRNA" evidence="1">
    <location>
        <position position="101"/>
    </location>
</feature>
<feature type="site" description="Interaction with substrate tRNA" evidence="1">
    <location>
        <position position="124"/>
    </location>
</feature>
<reference key="1">
    <citation type="journal article" date="2002" name="Proc. Natl. Acad. Sci. U.S.A.">
        <title>Complete genome sequence of Clostridium perfringens, an anaerobic flesh-eater.</title>
        <authorList>
            <person name="Shimizu T."/>
            <person name="Ohtani K."/>
            <person name="Hirakawa H."/>
            <person name="Ohshima K."/>
            <person name="Yamashita A."/>
            <person name="Shiba T."/>
            <person name="Ogasawara N."/>
            <person name="Hattori M."/>
            <person name="Kuhara S."/>
            <person name="Hayashi H."/>
        </authorList>
    </citation>
    <scope>NUCLEOTIDE SEQUENCE [LARGE SCALE GENOMIC DNA]</scope>
    <source>
        <strain>13 / Type A</strain>
    </source>
</reference>
<sequence>MNNNLLIIAGPTAVGKSDLSVDLAKKLNGEIISVDSMQIYKYMDIGSAKISKEEMGGIPHYLIDFVDPSKEFSVAEFKDLTTEKIKDIQSRGKLPILVGGTGLYINSIICNMNFAESDKDEEYREELEKIANEHGNEYLHEMLKDIDLESYNSIHFNNRKRVIRALETYKLTGKPFSSFKAKNSIYETPYNIYYYVLNMDRAKLYDRINKRVDIMFEKGLLEEVKNLKAMGLTDDMQSMKGIGYKEVLYYLDGKISLEQCIEMIKQGSRNYAKRQLTWFRKDPRAIFIDKDTFASEEDISSKIINDIINS</sequence>
<keyword id="KW-0067">ATP-binding</keyword>
<keyword id="KW-0460">Magnesium</keyword>
<keyword id="KW-0547">Nucleotide-binding</keyword>
<keyword id="KW-1185">Reference proteome</keyword>
<keyword id="KW-0808">Transferase</keyword>
<keyword id="KW-0819">tRNA processing</keyword>
<evidence type="ECO:0000255" key="1">
    <source>
        <dbReference type="HAMAP-Rule" id="MF_00185"/>
    </source>
</evidence>
<organism>
    <name type="scientific">Clostridium perfringens (strain 13 / Type A)</name>
    <dbReference type="NCBI Taxonomy" id="195102"/>
    <lineage>
        <taxon>Bacteria</taxon>
        <taxon>Bacillati</taxon>
        <taxon>Bacillota</taxon>
        <taxon>Clostridia</taxon>
        <taxon>Eubacteriales</taxon>
        <taxon>Clostridiaceae</taxon>
        <taxon>Clostridium</taxon>
    </lineage>
</organism>
<accession>Q8XL85</accession>